<sequence>MAFLKLTEQNVQGKTVLIRADMNVPFKDGKISDDTRIRASLASVKYCLDNGASVIVMTHLGRPTEGEFHPEDDVAPVAAHLGGLLGKDVKVLNDWRENKPALNAGDVVMLQNVRINKGEKKNDLELGKAYASLCDVFVNDAFGTAHRAQASTEAVAQAAPVACAGVLMAGELDALGKALKQPARPMVAIVAGSKVSTKLTILESLADKVDQLIVGGGIANTFLLAEGKAIGKSLAEHDLVEESKKIMAKMAAKGGSVPLPTDVVVAKAFAADAEAVVKDIADVAEDEMILDIGPKSAAALADLLKAADTVVWNGPVGVFEFDQFAGGTKALTEAIAQSKAFSIAGGGDTLAAIAKFGVTDQIGYISTGGGAFLEFLEGKELPAVAALEKRGE</sequence>
<gene>
    <name evidence="1" type="primary">pgk</name>
    <name type="ordered locus">NMCC_0010</name>
</gene>
<organism>
    <name type="scientific">Neisseria meningitidis serogroup C (strain 053442)</name>
    <dbReference type="NCBI Taxonomy" id="374833"/>
    <lineage>
        <taxon>Bacteria</taxon>
        <taxon>Pseudomonadati</taxon>
        <taxon>Pseudomonadota</taxon>
        <taxon>Betaproteobacteria</taxon>
        <taxon>Neisseriales</taxon>
        <taxon>Neisseriaceae</taxon>
        <taxon>Neisseria</taxon>
    </lineage>
</organism>
<dbReference type="EC" id="2.7.2.3" evidence="1"/>
<dbReference type="EMBL" id="CP000381">
    <property type="protein sequence ID" value="ABX72241.1"/>
    <property type="molecule type" value="Genomic_DNA"/>
</dbReference>
<dbReference type="RefSeq" id="WP_012221090.1">
    <property type="nucleotide sequence ID" value="NC_010120.1"/>
</dbReference>
<dbReference type="SMR" id="A9LZI3"/>
<dbReference type="KEGG" id="nmn:NMCC_0010"/>
<dbReference type="HOGENOM" id="CLU_025427_0_2_4"/>
<dbReference type="UniPathway" id="UPA00109">
    <property type="reaction ID" value="UER00185"/>
</dbReference>
<dbReference type="Proteomes" id="UP000001177">
    <property type="component" value="Chromosome"/>
</dbReference>
<dbReference type="GO" id="GO:0005829">
    <property type="term" value="C:cytosol"/>
    <property type="evidence" value="ECO:0007669"/>
    <property type="project" value="TreeGrafter"/>
</dbReference>
<dbReference type="GO" id="GO:0043531">
    <property type="term" value="F:ADP binding"/>
    <property type="evidence" value="ECO:0007669"/>
    <property type="project" value="TreeGrafter"/>
</dbReference>
<dbReference type="GO" id="GO:0005524">
    <property type="term" value="F:ATP binding"/>
    <property type="evidence" value="ECO:0007669"/>
    <property type="project" value="UniProtKB-KW"/>
</dbReference>
<dbReference type="GO" id="GO:0004618">
    <property type="term" value="F:phosphoglycerate kinase activity"/>
    <property type="evidence" value="ECO:0007669"/>
    <property type="project" value="UniProtKB-UniRule"/>
</dbReference>
<dbReference type="GO" id="GO:0006094">
    <property type="term" value="P:gluconeogenesis"/>
    <property type="evidence" value="ECO:0007669"/>
    <property type="project" value="TreeGrafter"/>
</dbReference>
<dbReference type="GO" id="GO:0006096">
    <property type="term" value="P:glycolytic process"/>
    <property type="evidence" value="ECO:0007669"/>
    <property type="project" value="UniProtKB-UniRule"/>
</dbReference>
<dbReference type="FunFam" id="3.40.50.1260:FF:000001">
    <property type="entry name" value="Phosphoglycerate kinase"/>
    <property type="match status" value="1"/>
</dbReference>
<dbReference type="FunFam" id="3.40.50.1260:FF:000002">
    <property type="entry name" value="Phosphoglycerate kinase"/>
    <property type="match status" value="1"/>
</dbReference>
<dbReference type="Gene3D" id="3.40.50.1260">
    <property type="entry name" value="Phosphoglycerate kinase, N-terminal domain"/>
    <property type="match status" value="2"/>
</dbReference>
<dbReference type="HAMAP" id="MF_00145">
    <property type="entry name" value="Phosphoglyc_kinase"/>
    <property type="match status" value="1"/>
</dbReference>
<dbReference type="InterPro" id="IPR001576">
    <property type="entry name" value="Phosphoglycerate_kinase"/>
</dbReference>
<dbReference type="InterPro" id="IPR015911">
    <property type="entry name" value="Phosphoglycerate_kinase_CS"/>
</dbReference>
<dbReference type="InterPro" id="IPR015824">
    <property type="entry name" value="Phosphoglycerate_kinase_N"/>
</dbReference>
<dbReference type="InterPro" id="IPR036043">
    <property type="entry name" value="Phosphoglycerate_kinase_sf"/>
</dbReference>
<dbReference type="PANTHER" id="PTHR11406">
    <property type="entry name" value="PHOSPHOGLYCERATE KINASE"/>
    <property type="match status" value="1"/>
</dbReference>
<dbReference type="PANTHER" id="PTHR11406:SF23">
    <property type="entry name" value="PHOSPHOGLYCERATE KINASE 1, CHLOROPLASTIC-RELATED"/>
    <property type="match status" value="1"/>
</dbReference>
<dbReference type="Pfam" id="PF00162">
    <property type="entry name" value="PGK"/>
    <property type="match status" value="1"/>
</dbReference>
<dbReference type="PIRSF" id="PIRSF000724">
    <property type="entry name" value="Pgk"/>
    <property type="match status" value="1"/>
</dbReference>
<dbReference type="PRINTS" id="PR00477">
    <property type="entry name" value="PHGLYCKINASE"/>
</dbReference>
<dbReference type="SUPFAM" id="SSF53748">
    <property type="entry name" value="Phosphoglycerate kinase"/>
    <property type="match status" value="1"/>
</dbReference>
<dbReference type="PROSITE" id="PS00111">
    <property type="entry name" value="PGLYCERATE_KINASE"/>
    <property type="match status" value="1"/>
</dbReference>
<keyword id="KW-0067">ATP-binding</keyword>
<keyword id="KW-0963">Cytoplasm</keyword>
<keyword id="KW-0324">Glycolysis</keyword>
<keyword id="KW-0418">Kinase</keyword>
<keyword id="KW-0547">Nucleotide-binding</keyword>
<keyword id="KW-0808">Transferase</keyword>
<evidence type="ECO:0000255" key="1">
    <source>
        <dbReference type="HAMAP-Rule" id="MF_00145"/>
    </source>
</evidence>
<protein>
    <recommendedName>
        <fullName evidence="1">Phosphoglycerate kinase</fullName>
        <ecNumber evidence="1">2.7.2.3</ecNumber>
    </recommendedName>
</protein>
<accession>A9LZI3</accession>
<proteinExistence type="inferred from homology"/>
<reference key="1">
    <citation type="journal article" date="2008" name="Genomics">
        <title>Characterization of ST-4821 complex, a unique Neisseria meningitidis clone.</title>
        <authorList>
            <person name="Peng J."/>
            <person name="Yang L."/>
            <person name="Yang F."/>
            <person name="Yang J."/>
            <person name="Yan Y."/>
            <person name="Nie H."/>
            <person name="Zhang X."/>
            <person name="Xiong Z."/>
            <person name="Jiang Y."/>
            <person name="Cheng F."/>
            <person name="Xu X."/>
            <person name="Chen S."/>
            <person name="Sun L."/>
            <person name="Li W."/>
            <person name="Shen Y."/>
            <person name="Shao Z."/>
            <person name="Liang X."/>
            <person name="Xu J."/>
            <person name="Jin Q."/>
        </authorList>
    </citation>
    <scope>NUCLEOTIDE SEQUENCE [LARGE SCALE GENOMIC DNA]</scope>
    <source>
        <strain>053442</strain>
    </source>
</reference>
<comment type="catalytic activity">
    <reaction evidence="1">
        <text>(2R)-3-phosphoglycerate + ATP = (2R)-3-phospho-glyceroyl phosphate + ADP</text>
        <dbReference type="Rhea" id="RHEA:14801"/>
        <dbReference type="ChEBI" id="CHEBI:30616"/>
        <dbReference type="ChEBI" id="CHEBI:57604"/>
        <dbReference type="ChEBI" id="CHEBI:58272"/>
        <dbReference type="ChEBI" id="CHEBI:456216"/>
        <dbReference type="EC" id="2.7.2.3"/>
    </reaction>
</comment>
<comment type="pathway">
    <text evidence="1">Carbohydrate degradation; glycolysis; pyruvate from D-glyceraldehyde 3-phosphate: step 2/5.</text>
</comment>
<comment type="subunit">
    <text evidence="1">Monomer.</text>
</comment>
<comment type="subcellular location">
    <subcellularLocation>
        <location evidence="1">Cytoplasm</location>
    </subcellularLocation>
</comment>
<comment type="similarity">
    <text evidence="1">Belongs to the phosphoglycerate kinase family.</text>
</comment>
<name>PGK_NEIM0</name>
<feature type="chain" id="PRO_1000076595" description="Phosphoglycerate kinase">
    <location>
        <begin position="1"/>
        <end position="392"/>
    </location>
</feature>
<feature type="binding site" evidence="1">
    <location>
        <begin position="21"/>
        <end position="23"/>
    </location>
    <ligand>
        <name>substrate</name>
    </ligand>
</feature>
<feature type="binding site" evidence="1">
    <location>
        <position position="36"/>
    </location>
    <ligand>
        <name>substrate</name>
    </ligand>
</feature>
<feature type="binding site" evidence="1">
    <location>
        <begin position="59"/>
        <end position="62"/>
    </location>
    <ligand>
        <name>substrate</name>
    </ligand>
</feature>
<feature type="binding site" evidence="1">
    <location>
        <position position="114"/>
    </location>
    <ligand>
        <name>substrate</name>
    </ligand>
</feature>
<feature type="binding site" evidence="1">
    <location>
        <position position="147"/>
    </location>
    <ligand>
        <name>substrate</name>
    </ligand>
</feature>
<feature type="binding site" evidence="1">
    <location>
        <position position="198"/>
    </location>
    <ligand>
        <name>ATP</name>
        <dbReference type="ChEBI" id="CHEBI:30616"/>
    </ligand>
</feature>
<feature type="binding site" evidence="1">
    <location>
        <position position="320"/>
    </location>
    <ligand>
        <name>ATP</name>
        <dbReference type="ChEBI" id="CHEBI:30616"/>
    </ligand>
</feature>
<feature type="binding site" evidence="1">
    <location>
        <begin position="346"/>
        <end position="349"/>
    </location>
    <ligand>
        <name>ATP</name>
        <dbReference type="ChEBI" id="CHEBI:30616"/>
    </ligand>
</feature>